<organism>
    <name type="scientific">Burkholderia orbicola (strain AU 1054)</name>
    <dbReference type="NCBI Taxonomy" id="331271"/>
    <lineage>
        <taxon>Bacteria</taxon>
        <taxon>Pseudomonadati</taxon>
        <taxon>Pseudomonadota</taxon>
        <taxon>Betaproteobacteria</taxon>
        <taxon>Burkholderiales</taxon>
        <taxon>Burkholderiaceae</taxon>
        <taxon>Burkholderia</taxon>
        <taxon>Burkholderia cepacia complex</taxon>
        <taxon>Burkholderia orbicola</taxon>
    </lineage>
</organism>
<comment type="function">
    <text evidence="1">Catalyzes the formation of 4-diphosphocytidyl-2-C-methyl-D-erythritol from CTP and 2-C-methyl-D-erythritol 4-phosphate (MEP).</text>
</comment>
<comment type="catalytic activity">
    <reaction evidence="1">
        <text>2-C-methyl-D-erythritol 4-phosphate + CTP + H(+) = 4-CDP-2-C-methyl-D-erythritol + diphosphate</text>
        <dbReference type="Rhea" id="RHEA:13429"/>
        <dbReference type="ChEBI" id="CHEBI:15378"/>
        <dbReference type="ChEBI" id="CHEBI:33019"/>
        <dbReference type="ChEBI" id="CHEBI:37563"/>
        <dbReference type="ChEBI" id="CHEBI:57823"/>
        <dbReference type="ChEBI" id="CHEBI:58262"/>
        <dbReference type="EC" id="2.7.7.60"/>
    </reaction>
</comment>
<comment type="pathway">
    <text evidence="1">Isoprenoid biosynthesis; isopentenyl diphosphate biosynthesis via DXP pathway; isopentenyl diphosphate from 1-deoxy-D-xylulose 5-phosphate: step 2/6.</text>
</comment>
<comment type="similarity">
    <text evidence="1">Belongs to the IspD/TarI cytidylyltransferase family. IspD subfamily.</text>
</comment>
<feature type="chain" id="PRO_1000022901" description="2-C-methyl-D-erythritol 4-phosphate cytidylyltransferase">
    <location>
        <begin position="1"/>
        <end position="236"/>
    </location>
</feature>
<feature type="site" description="Transition state stabilizer" evidence="1">
    <location>
        <position position="17"/>
    </location>
</feature>
<feature type="site" description="Transition state stabilizer" evidence="1">
    <location>
        <position position="24"/>
    </location>
</feature>
<feature type="site" description="Positions MEP for the nucleophilic attack" evidence="1">
    <location>
        <position position="159"/>
    </location>
</feature>
<feature type="site" description="Positions MEP for the nucleophilic attack" evidence="1">
    <location>
        <position position="215"/>
    </location>
</feature>
<gene>
    <name evidence="1" type="primary">ispD</name>
    <name type="ordered locus">Bcen_6136</name>
</gene>
<keyword id="KW-0414">Isoprene biosynthesis</keyword>
<keyword id="KW-0548">Nucleotidyltransferase</keyword>
<keyword id="KW-0808">Transferase</keyword>
<evidence type="ECO:0000255" key="1">
    <source>
        <dbReference type="HAMAP-Rule" id="MF_00108"/>
    </source>
</evidence>
<name>ISPD_BURO1</name>
<accession>Q1BHA5</accession>
<reference key="1">
    <citation type="submission" date="2006-05" db="EMBL/GenBank/DDBJ databases">
        <title>Complete sequence of chromosome 3 of Burkholderia cenocepacia AU 1054.</title>
        <authorList>
            <consortium name="US DOE Joint Genome Institute"/>
            <person name="Copeland A."/>
            <person name="Lucas S."/>
            <person name="Lapidus A."/>
            <person name="Barry K."/>
            <person name="Detter J.C."/>
            <person name="Glavina del Rio T."/>
            <person name="Hammon N."/>
            <person name="Israni S."/>
            <person name="Dalin E."/>
            <person name="Tice H."/>
            <person name="Pitluck S."/>
            <person name="Chain P."/>
            <person name="Malfatti S."/>
            <person name="Shin M."/>
            <person name="Vergez L."/>
            <person name="Schmutz J."/>
            <person name="Larimer F."/>
            <person name="Land M."/>
            <person name="Hauser L."/>
            <person name="Kyrpides N."/>
            <person name="Lykidis A."/>
            <person name="LiPuma J.J."/>
            <person name="Konstantinidis K."/>
            <person name="Tiedje J.M."/>
            <person name="Richardson P."/>
        </authorList>
    </citation>
    <scope>NUCLEOTIDE SEQUENCE [LARGE SCALE GENOMIC DNA]</scope>
    <source>
        <strain>AU 1054</strain>
    </source>
</reference>
<proteinExistence type="inferred from homology"/>
<protein>
    <recommendedName>
        <fullName evidence="1">2-C-methyl-D-erythritol 4-phosphate cytidylyltransferase</fullName>
        <ecNumber evidence="1">2.7.7.60</ecNumber>
    </recommendedName>
    <alternativeName>
        <fullName evidence="1">4-diphosphocytidyl-2C-methyl-D-erythritol synthase</fullName>
    </alternativeName>
    <alternativeName>
        <fullName evidence="1">MEP cytidylyltransferase</fullName>
        <shortName evidence="1">MCT</shortName>
    </alternativeName>
</protein>
<sequence length="236" mass="25411">MTPRLFALIPCAGTGSRSGSAVPKQYRTLAGRALLHYTLAAFDACSEFAQTLVVLAPDDSHFDARRFAGLRFAVRRCGGGSRQASVLKGLLELAEFGATDHDWVLVHDAARPGITPELIRTLVATLKDDPVGGIVALPVADTLKRVPAGGDAIARTESRDALWQAQTPQMFRIGMLREAILQAQREGHDLTDEASAIEWAGHTPRVVQGSLRNFKVTYPEDFALAEAILARPANAS</sequence>
<dbReference type="EC" id="2.7.7.60" evidence="1"/>
<dbReference type="EMBL" id="CP000380">
    <property type="protein sequence ID" value="ABF81000.1"/>
    <property type="molecule type" value="Genomic_DNA"/>
</dbReference>
<dbReference type="SMR" id="Q1BHA5"/>
<dbReference type="HOGENOM" id="CLU_061281_3_0_4"/>
<dbReference type="UniPathway" id="UPA00056">
    <property type="reaction ID" value="UER00093"/>
</dbReference>
<dbReference type="GO" id="GO:0050518">
    <property type="term" value="F:2-C-methyl-D-erythritol 4-phosphate cytidylyltransferase activity"/>
    <property type="evidence" value="ECO:0007669"/>
    <property type="project" value="UniProtKB-UniRule"/>
</dbReference>
<dbReference type="GO" id="GO:0019288">
    <property type="term" value="P:isopentenyl diphosphate biosynthetic process, methylerythritol 4-phosphate pathway"/>
    <property type="evidence" value="ECO:0007669"/>
    <property type="project" value="UniProtKB-UniRule"/>
</dbReference>
<dbReference type="CDD" id="cd02516">
    <property type="entry name" value="CDP-ME_synthetase"/>
    <property type="match status" value="1"/>
</dbReference>
<dbReference type="FunFam" id="3.90.550.10:FF:000003">
    <property type="entry name" value="2-C-methyl-D-erythritol 4-phosphate cytidylyltransferase"/>
    <property type="match status" value="1"/>
</dbReference>
<dbReference type="Gene3D" id="3.90.550.10">
    <property type="entry name" value="Spore Coat Polysaccharide Biosynthesis Protein SpsA, Chain A"/>
    <property type="match status" value="1"/>
</dbReference>
<dbReference type="HAMAP" id="MF_00108">
    <property type="entry name" value="IspD"/>
    <property type="match status" value="1"/>
</dbReference>
<dbReference type="InterPro" id="IPR001228">
    <property type="entry name" value="IspD"/>
</dbReference>
<dbReference type="InterPro" id="IPR034683">
    <property type="entry name" value="IspD/TarI"/>
</dbReference>
<dbReference type="InterPro" id="IPR050088">
    <property type="entry name" value="IspD/TarI_cytidylyltransf_bact"/>
</dbReference>
<dbReference type="InterPro" id="IPR018294">
    <property type="entry name" value="ISPD_synthase_CS"/>
</dbReference>
<dbReference type="InterPro" id="IPR029044">
    <property type="entry name" value="Nucleotide-diphossugar_trans"/>
</dbReference>
<dbReference type="NCBIfam" id="TIGR00453">
    <property type="entry name" value="ispD"/>
    <property type="match status" value="1"/>
</dbReference>
<dbReference type="PANTHER" id="PTHR32125">
    <property type="entry name" value="2-C-METHYL-D-ERYTHRITOL 4-PHOSPHATE CYTIDYLYLTRANSFERASE, CHLOROPLASTIC"/>
    <property type="match status" value="1"/>
</dbReference>
<dbReference type="PANTHER" id="PTHR32125:SF4">
    <property type="entry name" value="2-C-METHYL-D-ERYTHRITOL 4-PHOSPHATE CYTIDYLYLTRANSFERASE, CHLOROPLASTIC"/>
    <property type="match status" value="1"/>
</dbReference>
<dbReference type="Pfam" id="PF01128">
    <property type="entry name" value="IspD"/>
    <property type="match status" value="1"/>
</dbReference>
<dbReference type="SUPFAM" id="SSF53448">
    <property type="entry name" value="Nucleotide-diphospho-sugar transferases"/>
    <property type="match status" value="1"/>
</dbReference>
<dbReference type="PROSITE" id="PS01295">
    <property type="entry name" value="ISPD"/>
    <property type="match status" value="1"/>
</dbReference>